<sequence>MAGALRGPGDADWRAEIERRVRGEVLRDAPLAPRTAVRVGGPADLLVRPADPGALAALLRAVRELSVPLTILGGGANTLVADAGVRGVVLRLPQGFGEEARDGERLVLGAGAPTSRLWVRAHAAGLVGIEFVAGIPGTLGGAVAMNAGTKIGEMKDVVSAVELATADGAGFVPAASLGFAYRTCRLPAGAVITRVQLTLRPGDVAESERIMQADRDGRRRTQPLDRPTFGSTFTNPPGDFAGRLVEAVGLKGHRVGGATWSDVHANFVSNLGGATARDVLALMRLARTRVKQRFGISLETEVRLVGEFHAEDLEGLRA</sequence>
<protein>
    <recommendedName>
        <fullName evidence="1">UDP-N-acetylenolpyruvoylglucosamine reductase</fullName>
        <ecNumber evidence="1">1.3.1.98</ecNumber>
    </recommendedName>
    <alternativeName>
        <fullName evidence="1">UDP-N-acetylmuramate dehydrogenase</fullName>
    </alternativeName>
</protein>
<proteinExistence type="inferred from homology"/>
<accession>A7HH69</accession>
<comment type="function">
    <text evidence="1">Cell wall formation.</text>
</comment>
<comment type="catalytic activity">
    <reaction evidence="1">
        <text>UDP-N-acetyl-alpha-D-muramate + NADP(+) = UDP-N-acetyl-3-O-(1-carboxyvinyl)-alpha-D-glucosamine + NADPH + H(+)</text>
        <dbReference type="Rhea" id="RHEA:12248"/>
        <dbReference type="ChEBI" id="CHEBI:15378"/>
        <dbReference type="ChEBI" id="CHEBI:57783"/>
        <dbReference type="ChEBI" id="CHEBI:58349"/>
        <dbReference type="ChEBI" id="CHEBI:68483"/>
        <dbReference type="ChEBI" id="CHEBI:70757"/>
        <dbReference type="EC" id="1.3.1.98"/>
    </reaction>
</comment>
<comment type="cofactor">
    <cofactor evidence="1">
        <name>FAD</name>
        <dbReference type="ChEBI" id="CHEBI:57692"/>
    </cofactor>
</comment>
<comment type="pathway">
    <text evidence="1">Cell wall biogenesis; peptidoglycan biosynthesis.</text>
</comment>
<comment type="subcellular location">
    <subcellularLocation>
        <location evidence="1">Cytoplasm</location>
    </subcellularLocation>
</comment>
<comment type="similarity">
    <text evidence="1">Belongs to the MurB family.</text>
</comment>
<feature type="chain" id="PRO_0000332446" description="UDP-N-acetylenolpyruvoylglucosamine reductase">
    <location>
        <begin position="1"/>
        <end position="318"/>
    </location>
</feature>
<feature type="domain" description="FAD-binding PCMH-type" evidence="1">
    <location>
        <begin position="39"/>
        <end position="202"/>
    </location>
</feature>
<feature type="region of interest" description="Disordered" evidence="2">
    <location>
        <begin position="214"/>
        <end position="235"/>
    </location>
</feature>
<feature type="compositionally biased region" description="Basic and acidic residues" evidence="2">
    <location>
        <begin position="214"/>
        <end position="223"/>
    </location>
</feature>
<feature type="active site" evidence="1">
    <location>
        <position position="182"/>
    </location>
</feature>
<feature type="active site" description="Proton donor" evidence="1">
    <location>
        <position position="231"/>
    </location>
</feature>
<feature type="active site" evidence="1">
    <location>
        <position position="301"/>
    </location>
</feature>
<gene>
    <name evidence="1" type="primary">murB</name>
    <name type="ordered locus">Anae109_3886</name>
</gene>
<reference key="1">
    <citation type="journal article" date="2015" name="Genome Announc.">
        <title>Complete genome sequence of Anaeromyxobacter sp. Fw109-5, an anaerobic, metal-reducing bacterium isolated from a contaminated subsurface environment.</title>
        <authorList>
            <person name="Hwang C."/>
            <person name="Copeland A."/>
            <person name="Lucas S."/>
            <person name="Lapidus A."/>
            <person name="Barry K."/>
            <person name="Glavina Del Rio T."/>
            <person name="Dalin E."/>
            <person name="Tice H."/>
            <person name="Pitluck S."/>
            <person name="Sims D."/>
            <person name="Brettin T."/>
            <person name="Bruce D.C."/>
            <person name="Detter J.C."/>
            <person name="Han C.S."/>
            <person name="Schmutz J."/>
            <person name="Larimer F.W."/>
            <person name="Land M.L."/>
            <person name="Hauser L.J."/>
            <person name="Kyrpides N."/>
            <person name="Lykidis A."/>
            <person name="Richardson P."/>
            <person name="Belieav A."/>
            <person name="Sanford R.A."/>
            <person name="Loeffler F.E."/>
            <person name="Fields M.W."/>
        </authorList>
    </citation>
    <scope>NUCLEOTIDE SEQUENCE [LARGE SCALE GENOMIC DNA]</scope>
    <source>
        <strain>Fw109-5</strain>
    </source>
</reference>
<organism>
    <name type="scientific">Anaeromyxobacter sp. (strain Fw109-5)</name>
    <dbReference type="NCBI Taxonomy" id="404589"/>
    <lineage>
        <taxon>Bacteria</taxon>
        <taxon>Pseudomonadati</taxon>
        <taxon>Myxococcota</taxon>
        <taxon>Myxococcia</taxon>
        <taxon>Myxococcales</taxon>
        <taxon>Cystobacterineae</taxon>
        <taxon>Anaeromyxobacteraceae</taxon>
        <taxon>Anaeromyxobacter</taxon>
    </lineage>
</organism>
<keyword id="KW-0131">Cell cycle</keyword>
<keyword id="KW-0132">Cell division</keyword>
<keyword id="KW-0133">Cell shape</keyword>
<keyword id="KW-0961">Cell wall biogenesis/degradation</keyword>
<keyword id="KW-0963">Cytoplasm</keyword>
<keyword id="KW-0274">FAD</keyword>
<keyword id="KW-0285">Flavoprotein</keyword>
<keyword id="KW-0521">NADP</keyword>
<keyword id="KW-0560">Oxidoreductase</keyword>
<keyword id="KW-0573">Peptidoglycan synthesis</keyword>
<keyword id="KW-1185">Reference proteome</keyword>
<dbReference type="EC" id="1.3.1.98" evidence="1"/>
<dbReference type="EMBL" id="CP000769">
    <property type="protein sequence ID" value="ABS28065.1"/>
    <property type="molecule type" value="Genomic_DNA"/>
</dbReference>
<dbReference type="RefSeq" id="WP_012098699.1">
    <property type="nucleotide sequence ID" value="NC_009675.1"/>
</dbReference>
<dbReference type="SMR" id="A7HH69"/>
<dbReference type="STRING" id="404589.Anae109_3886"/>
<dbReference type="KEGG" id="afw:Anae109_3886"/>
<dbReference type="eggNOG" id="COG0812">
    <property type="taxonomic scope" value="Bacteria"/>
</dbReference>
<dbReference type="HOGENOM" id="CLU_035304_1_1_7"/>
<dbReference type="OrthoDB" id="9804753at2"/>
<dbReference type="UniPathway" id="UPA00219"/>
<dbReference type="Proteomes" id="UP000006382">
    <property type="component" value="Chromosome"/>
</dbReference>
<dbReference type="GO" id="GO:0005829">
    <property type="term" value="C:cytosol"/>
    <property type="evidence" value="ECO:0007669"/>
    <property type="project" value="TreeGrafter"/>
</dbReference>
<dbReference type="GO" id="GO:0071949">
    <property type="term" value="F:FAD binding"/>
    <property type="evidence" value="ECO:0007669"/>
    <property type="project" value="InterPro"/>
</dbReference>
<dbReference type="GO" id="GO:0008762">
    <property type="term" value="F:UDP-N-acetylmuramate dehydrogenase activity"/>
    <property type="evidence" value="ECO:0007669"/>
    <property type="project" value="UniProtKB-UniRule"/>
</dbReference>
<dbReference type="GO" id="GO:0051301">
    <property type="term" value="P:cell division"/>
    <property type="evidence" value="ECO:0007669"/>
    <property type="project" value="UniProtKB-KW"/>
</dbReference>
<dbReference type="GO" id="GO:0071555">
    <property type="term" value="P:cell wall organization"/>
    <property type="evidence" value="ECO:0007669"/>
    <property type="project" value="UniProtKB-KW"/>
</dbReference>
<dbReference type="GO" id="GO:0009252">
    <property type="term" value="P:peptidoglycan biosynthetic process"/>
    <property type="evidence" value="ECO:0007669"/>
    <property type="project" value="UniProtKB-UniRule"/>
</dbReference>
<dbReference type="GO" id="GO:0008360">
    <property type="term" value="P:regulation of cell shape"/>
    <property type="evidence" value="ECO:0007669"/>
    <property type="project" value="UniProtKB-KW"/>
</dbReference>
<dbReference type="Gene3D" id="3.30.465.10">
    <property type="match status" value="1"/>
</dbReference>
<dbReference type="Gene3D" id="3.90.78.10">
    <property type="entry name" value="UDP-N-acetylenolpyruvoylglucosamine reductase, C-terminal domain"/>
    <property type="match status" value="1"/>
</dbReference>
<dbReference type="Gene3D" id="3.30.43.10">
    <property type="entry name" value="Uridine Diphospho-n-acetylenolpyruvylglucosamine Reductase, domain 2"/>
    <property type="match status" value="1"/>
</dbReference>
<dbReference type="HAMAP" id="MF_00037">
    <property type="entry name" value="MurB"/>
    <property type="match status" value="1"/>
</dbReference>
<dbReference type="InterPro" id="IPR016166">
    <property type="entry name" value="FAD-bd_PCMH"/>
</dbReference>
<dbReference type="InterPro" id="IPR036318">
    <property type="entry name" value="FAD-bd_PCMH-like_sf"/>
</dbReference>
<dbReference type="InterPro" id="IPR016167">
    <property type="entry name" value="FAD-bd_PCMH_sub1"/>
</dbReference>
<dbReference type="InterPro" id="IPR016169">
    <property type="entry name" value="FAD-bd_PCMH_sub2"/>
</dbReference>
<dbReference type="InterPro" id="IPR003170">
    <property type="entry name" value="MurB"/>
</dbReference>
<dbReference type="InterPro" id="IPR011601">
    <property type="entry name" value="MurB_C"/>
</dbReference>
<dbReference type="InterPro" id="IPR036635">
    <property type="entry name" value="MurB_C_sf"/>
</dbReference>
<dbReference type="InterPro" id="IPR006094">
    <property type="entry name" value="Oxid_FAD_bind_N"/>
</dbReference>
<dbReference type="NCBIfam" id="TIGR00179">
    <property type="entry name" value="murB"/>
    <property type="match status" value="1"/>
</dbReference>
<dbReference type="NCBIfam" id="NF010480">
    <property type="entry name" value="PRK13905.1"/>
    <property type="match status" value="1"/>
</dbReference>
<dbReference type="PANTHER" id="PTHR21071">
    <property type="entry name" value="UDP-N-ACETYLENOLPYRUVOYLGLUCOSAMINE REDUCTASE"/>
    <property type="match status" value="1"/>
</dbReference>
<dbReference type="PANTHER" id="PTHR21071:SF4">
    <property type="entry name" value="UDP-N-ACETYLENOLPYRUVOYLGLUCOSAMINE REDUCTASE"/>
    <property type="match status" value="1"/>
</dbReference>
<dbReference type="Pfam" id="PF01565">
    <property type="entry name" value="FAD_binding_4"/>
    <property type="match status" value="1"/>
</dbReference>
<dbReference type="Pfam" id="PF02873">
    <property type="entry name" value="MurB_C"/>
    <property type="match status" value="1"/>
</dbReference>
<dbReference type="SUPFAM" id="SSF56176">
    <property type="entry name" value="FAD-binding/transporter-associated domain-like"/>
    <property type="match status" value="1"/>
</dbReference>
<dbReference type="SUPFAM" id="SSF56194">
    <property type="entry name" value="Uridine diphospho-N-Acetylenolpyruvylglucosamine reductase, MurB, C-terminal domain"/>
    <property type="match status" value="1"/>
</dbReference>
<dbReference type="PROSITE" id="PS51387">
    <property type="entry name" value="FAD_PCMH"/>
    <property type="match status" value="1"/>
</dbReference>
<evidence type="ECO:0000255" key="1">
    <source>
        <dbReference type="HAMAP-Rule" id="MF_00037"/>
    </source>
</evidence>
<evidence type="ECO:0000256" key="2">
    <source>
        <dbReference type="SAM" id="MobiDB-lite"/>
    </source>
</evidence>
<name>MURB_ANADF</name>